<feature type="chain" id="PRO_1000048917" description="Large ribosomal subunit protein bL20">
    <location>
        <begin position="1"/>
        <end position="118"/>
    </location>
</feature>
<dbReference type="EMBL" id="CP000697">
    <property type="protein sequence ID" value="ABQ32113.1"/>
    <property type="molecule type" value="Genomic_DNA"/>
</dbReference>
<dbReference type="RefSeq" id="WP_007421713.1">
    <property type="nucleotide sequence ID" value="NC_009484.1"/>
</dbReference>
<dbReference type="SMR" id="A5G2N1"/>
<dbReference type="STRING" id="349163.Acry_2923"/>
<dbReference type="KEGG" id="acr:Acry_2923"/>
<dbReference type="eggNOG" id="COG0292">
    <property type="taxonomic scope" value="Bacteria"/>
</dbReference>
<dbReference type="HOGENOM" id="CLU_123265_0_1_5"/>
<dbReference type="Proteomes" id="UP000000245">
    <property type="component" value="Chromosome"/>
</dbReference>
<dbReference type="GO" id="GO:1990904">
    <property type="term" value="C:ribonucleoprotein complex"/>
    <property type="evidence" value="ECO:0007669"/>
    <property type="project" value="UniProtKB-KW"/>
</dbReference>
<dbReference type="GO" id="GO:0005840">
    <property type="term" value="C:ribosome"/>
    <property type="evidence" value="ECO:0007669"/>
    <property type="project" value="UniProtKB-KW"/>
</dbReference>
<dbReference type="GO" id="GO:0019843">
    <property type="term" value="F:rRNA binding"/>
    <property type="evidence" value="ECO:0007669"/>
    <property type="project" value="UniProtKB-UniRule"/>
</dbReference>
<dbReference type="GO" id="GO:0003735">
    <property type="term" value="F:structural constituent of ribosome"/>
    <property type="evidence" value="ECO:0007669"/>
    <property type="project" value="InterPro"/>
</dbReference>
<dbReference type="GO" id="GO:0000027">
    <property type="term" value="P:ribosomal large subunit assembly"/>
    <property type="evidence" value="ECO:0007669"/>
    <property type="project" value="UniProtKB-UniRule"/>
</dbReference>
<dbReference type="GO" id="GO:0006412">
    <property type="term" value="P:translation"/>
    <property type="evidence" value="ECO:0007669"/>
    <property type="project" value="InterPro"/>
</dbReference>
<dbReference type="CDD" id="cd07026">
    <property type="entry name" value="Ribosomal_L20"/>
    <property type="match status" value="1"/>
</dbReference>
<dbReference type="FunFam" id="1.10.1900.20:FF:000001">
    <property type="entry name" value="50S ribosomal protein L20"/>
    <property type="match status" value="1"/>
</dbReference>
<dbReference type="Gene3D" id="6.10.160.10">
    <property type="match status" value="1"/>
</dbReference>
<dbReference type="Gene3D" id="1.10.1900.20">
    <property type="entry name" value="Ribosomal protein L20"/>
    <property type="match status" value="1"/>
</dbReference>
<dbReference type="HAMAP" id="MF_00382">
    <property type="entry name" value="Ribosomal_bL20"/>
    <property type="match status" value="1"/>
</dbReference>
<dbReference type="InterPro" id="IPR005813">
    <property type="entry name" value="Ribosomal_bL20"/>
</dbReference>
<dbReference type="InterPro" id="IPR049946">
    <property type="entry name" value="RIBOSOMAL_L20_CS"/>
</dbReference>
<dbReference type="InterPro" id="IPR035566">
    <property type="entry name" value="Ribosomal_protein_bL20_C"/>
</dbReference>
<dbReference type="NCBIfam" id="TIGR01032">
    <property type="entry name" value="rplT_bact"/>
    <property type="match status" value="1"/>
</dbReference>
<dbReference type="PANTHER" id="PTHR10986">
    <property type="entry name" value="39S RIBOSOMAL PROTEIN L20"/>
    <property type="match status" value="1"/>
</dbReference>
<dbReference type="Pfam" id="PF00453">
    <property type="entry name" value="Ribosomal_L20"/>
    <property type="match status" value="1"/>
</dbReference>
<dbReference type="PRINTS" id="PR00062">
    <property type="entry name" value="RIBOSOMALL20"/>
</dbReference>
<dbReference type="SUPFAM" id="SSF74731">
    <property type="entry name" value="Ribosomal protein L20"/>
    <property type="match status" value="1"/>
</dbReference>
<dbReference type="PROSITE" id="PS00937">
    <property type="entry name" value="RIBOSOMAL_L20"/>
    <property type="match status" value="1"/>
</dbReference>
<keyword id="KW-1185">Reference proteome</keyword>
<keyword id="KW-0687">Ribonucleoprotein</keyword>
<keyword id="KW-0689">Ribosomal protein</keyword>
<keyword id="KW-0694">RNA-binding</keyword>
<keyword id="KW-0699">rRNA-binding</keyword>
<accession>A5G2N1</accession>
<gene>
    <name evidence="1" type="primary">rplT</name>
    <name type="ordered locus">Acry_2923</name>
</gene>
<reference key="1">
    <citation type="submission" date="2007-05" db="EMBL/GenBank/DDBJ databases">
        <title>Complete sequence of chromosome of Acidiphilium cryptum JF-5.</title>
        <authorList>
            <consortium name="US DOE Joint Genome Institute"/>
            <person name="Copeland A."/>
            <person name="Lucas S."/>
            <person name="Lapidus A."/>
            <person name="Barry K."/>
            <person name="Detter J.C."/>
            <person name="Glavina del Rio T."/>
            <person name="Hammon N."/>
            <person name="Israni S."/>
            <person name="Dalin E."/>
            <person name="Tice H."/>
            <person name="Pitluck S."/>
            <person name="Sims D."/>
            <person name="Brettin T."/>
            <person name="Bruce D."/>
            <person name="Han C."/>
            <person name="Schmutz J."/>
            <person name="Larimer F."/>
            <person name="Land M."/>
            <person name="Hauser L."/>
            <person name="Kyrpides N."/>
            <person name="Kim E."/>
            <person name="Magnuson T."/>
            <person name="Richardson P."/>
        </authorList>
    </citation>
    <scope>NUCLEOTIDE SEQUENCE [LARGE SCALE GENOMIC DNA]</scope>
    <source>
        <strain>JF-5</strain>
    </source>
</reference>
<sequence length="118" mass="13466">MARVKRGVTTHARHKKVLKQSKGFVGRSSTNYRIALERLEKALRYAYRDRRNKKREFRALWIQRINAAVREQGMTYSQFIAALKAANIELDRKVLAAMAFDDPAGFTAIVEAAKAVRG</sequence>
<proteinExistence type="inferred from homology"/>
<comment type="function">
    <text evidence="1">Binds directly to 23S ribosomal RNA and is necessary for the in vitro assembly process of the 50S ribosomal subunit. It is not involved in the protein synthesizing functions of that subunit.</text>
</comment>
<comment type="similarity">
    <text evidence="1">Belongs to the bacterial ribosomal protein bL20 family.</text>
</comment>
<organism>
    <name type="scientific">Acidiphilium cryptum (strain JF-5)</name>
    <dbReference type="NCBI Taxonomy" id="349163"/>
    <lineage>
        <taxon>Bacteria</taxon>
        <taxon>Pseudomonadati</taxon>
        <taxon>Pseudomonadota</taxon>
        <taxon>Alphaproteobacteria</taxon>
        <taxon>Acetobacterales</taxon>
        <taxon>Acidocellaceae</taxon>
        <taxon>Acidiphilium</taxon>
    </lineage>
</organism>
<protein>
    <recommendedName>
        <fullName evidence="1">Large ribosomal subunit protein bL20</fullName>
    </recommendedName>
    <alternativeName>
        <fullName evidence="2">50S ribosomal protein L20</fullName>
    </alternativeName>
</protein>
<name>RL20_ACICJ</name>
<evidence type="ECO:0000255" key="1">
    <source>
        <dbReference type="HAMAP-Rule" id="MF_00382"/>
    </source>
</evidence>
<evidence type="ECO:0000305" key="2"/>